<protein>
    <recommendedName>
        <fullName evidence="1">Small ribosomal subunit protein uS3</fullName>
    </recommendedName>
    <alternativeName>
        <fullName evidence="3">30S ribosomal protein S3</fullName>
    </alternativeName>
</protein>
<keyword id="KW-1185">Reference proteome</keyword>
<keyword id="KW-0687">Ribonucleoprotein</keyword>
<keyword id="KW-0689">Ribosomal protein</keyword>
<keyword id="KW-0694">RNA-binding</keyword>
<keyword id="KW-0699">rRNA-binding</keyword>
<organism>
    <name type="scientific">Neisseria meningitidis serogroup B (strain ATCC BAA-335 / MC58)</name>
    <dbReference type="NCBI Taxonomy" id="122586"/>
    <lineage>
        <taxon>Bacteria</taxon>
        <taxon>Pseudomonadati</taxon>
        <taxon>Pseudomonadota</taxon>
        <taxon>Betaproteobacteria</taxon>
        <taxon>Neisseriales</taxon>
        <taxon>Neisseriaceae</taxon>
        <taxon>Neisseria</taxon>
    </lineage>
</organism>
<comment type="function">
    <text evidence="1">Binds the lower part of the 30S subunit head. Binds mRNA in the 70S ribosome, positioning it for translation.</text>
</comment>
<comment type="subunit">
    <text evidence="1">Part of the 30S ribosomal subunit. Forms a tight complex with proteins S10 and S14.</text>
</comment>
<comment type="similarity">
    <text evidence="1">Belongs to the universal ribosomal protein uS3 family.</text>
</comment>
<proteinExistence type="inferred from homology"/>
<name>RS3_NEIMB</name>
<feature type="chain" id="PRO_0000130161" description="Small ribosomal subunit protein uS3">
    <location>
        <begin position="1"/>
        <end position="230"/>
    </location>
</feature>
<feature type="domain" description="KH type-2" evidence="1">
    <location>
        <begin position="39"/>
        <end position="107"/>
    </location>
</feature>
<feature type="region of interest" description="Disordered" evidence="2">
    <location>
        <begin position="210"/>
        <end position="230"/>
    </location>
</feature>
<gene>
    <name evidence="1" type="primary">rpsC</name>
    <name type="ordered locus">NMB0148</name>
</gene>
<dbReference type="EMBL" id="AE002098">
    <property type="protein sequence ID" value="AAF40606.1"/>
    <property type="molecule type" value="Genomic_DNA"/>
</dbReference>
<dbReference type="PIR" id="F81231">
    <property type="entry name" value="F81231"/>
</dbReference>
<dbReference type="RefSeq" id="NP_273206.1">
    <property type="nucleotide sequence ID" value="NC_003112.2"/>
</dbReference>
<dbReference type="RefSeq" id="WP_002215427.1">
    <property type="nucleotide sequence ID" value="NC_003112.2"/>
</dbReference>
<dbReference type="SMR" id="P66551"/>
<dbReference type="FunCoup" id="P66551">
    <property type="interactions" value="670"/>
</dbReference>
<dbReference type="STRING" id="122586.NMB0148"/>
<dbReference type="PaxDb" id="122586-NMB0148"/>
<dbReference type="GeneID" id="93387223"/>
<dbReference type="KEGG" id="nme:NMB0148"/>
<dbReference type="PATRIC" id="fig|122586.8.peg.189"/>
<dbReference type="HOGENOM" id="CLU_058591_0_2_4"/>
<dbReference type="InParanoid" id="P66551"/>
<dbReference type="OrthoDB" id="9806396at2"/>
<dbReference type="Proteomes" id="UP000000425">
    <property type="component" value="Chromosome"/>
</dbReference>
<dbReference type="GO" id="GO:0022627">
    <property type="term" value="C:cytosolic small ribosomal subunit"/>
    <property type="evidence" value="ECO:0000318"/>
    <property type="project" value="GO_Central"/>
</dbReference>
<dbReference type="GO" id="GO:0003729">
    <property type="term" value="F:mRNA binding"/>
    <property type="evidence" value="ECO:0007669"/>
    <property type="project" value="UniProtKB-UniRule"/>
</dbReference>
<dbReference type="GO" id="GO:0019843">
    <property type="term" value="F:rRNA binding"/>
    <property type="evidence" value="ECO:0007669"/>
    <property type="project" value="UniProtKB-UniRule"/>
</dbReference>
<dbReference type="GO" id="GO:0003735">
    <property type="term" value="F:structural constituent of ribosome"/>
    <property type="evidence" value="ECO:0000318"/>
    <property type="project" value="GO_Central"/>
</dbReference>
<dbReference type="GO" id="GO:0006412">
    <property type="term" value="P:translation"/>
    <property type="evidence" value="ECO:0007669"/>
    <property type="project" value="UniProtKB-UniRule"/>
</dbReference>
<dbReference type="CDD" id="cd02412">
    <property type="entry name" value="KH-II_30S_S3"/>
    <property type="match status" value="1"/>
</dbReference>
<dbReference type="FunFam" id="3.30.1140.32:FF:000006">
    <property type="entry name" value="30S ribosomal protein S3"/>
    <property type="match status" value="1"/>
</dbReference>
<dbReference type="FunFam" id="3.30.300.20:FF:000001">
    <property type="entry name" value="30S ribosomal protein S3"/>
    <property type="match status" value="1"/>
</dbReference>
<dbReference type="Gene3D" id="3.30.300.20">
    <property type="match status" value="1"/>
</dbReference>
<dbReference type="Gene3D" id="3.30.1140.32">
    <property type="entry name" value="Ribosomal protein S3, C-terminal domain"/>
    <property type="match status" value="1"/>
</dbReference>
<dbReference type="HAMAP" id="MF_01309_B">
    <property type="entry name" value="Ribosomal_uS3_B"/>
    <property type="match status" value="1"/>
</dbReference>
<dbReference type="InterPro" id="IPR004087">
    <property type="entry name" value="KH_dom"/>
</dbReference>
<dbReference type="InterPro" id="IPR015946">
    <property type="entry name" value="KH_dom-like_a/b"/>
</dbReference>
<dbReference type="InterPro" id="IPR004044">
    <property type="entry name" value="KH_dom_type_2"/>
</dbReference>
<dbReference type="InterPro" id="IPR009019">
    <property type="entry name" value="KH_sf_prok-type"/>
</dbReference>
<dbReference type="InterPro" id="IPR036419">
    <property type="entry name" value="Ribosomal_S3_C_sf"/>
</dbReference>
<dbReference type="InterPro" id="IPR005704">
    <property type="entry name" value="Ribosomal_uS3_bac-typ"/>
</dbReference>
<dbReference type="InterPro" id="IPR001351">
    <property type="entry name" value="Ribosomal_uS3_C"/>
</dbReference>
<dbReference type="InterPro" id="IPR018280">
    <property type="entry name" value="Ribosomal_uS3_CS"/>
</dbReference>
<dbReference type="NCBIfam" id="TIGR01009">
    <property type="entry name" value="rpsC_bact"/>
    <property type="match status" value="1"/>
</dbReference>
<dbReference type="PANTHER" id="PTHR11760">
    <property type="entry name" value="30S/40S RIBOSOMAL PROTEIN S3"/>
    <property type="match status" value="1"/>
</dbReference>
<dbReference type="PANTHER" id="PTHR11760:SF19">
    <property type="entry name" value="SMALL RIBOSOMAL SUBUNIT PROTEIN US3C"/>
    <property type="match status" value="1"/>
</dbReference>
<dbReference type="Pfam" id="PF07650">
    <property type="entry name" value="KH_2"/>
    <property type="match status" value="1"/>
</dbReference>
<dbReference type="Pfam" id="PF00189">
    <property type="entry name" value="Ribosomal_S3_C"/>
    <property type="match status" value="1"/>
</dbReference>
<dbReference type="SMART" id="SM00322">
    <property type="entry name" value="KH"/>
    <property type="match status" value="1"/>
</dbReference>
<dbReference type="SUPFAM" id="SSF54814">
    <property type="entry name" value="Prokaryotic type KH domain (KH-domain type II)"/>
    <property type="match status" value="1"/>
</dbReference>
<dbReference type="SUPFAM" id="SSF54821">
    <property type="entry name" value="Ribosomal protein S3 C-terminal domain"/>
    <property type="match status" value="1"/>
</dbReference>
<dbReference type="PROSITE" id="PS50823">
    <property type="entry name" value="KH_TYPE_2"/>
    <property type="match status" value="1"/>
</dbReference>
<dbReference type="PROSITE" id="PS00548">
    <property type="entry name" value="RIBOSOMAL_S3"/>
    <property type="match status" value="1"/>
</dbReference>
<reference key="1">
    <citation type="journal article" date="2000" name="Science">
        <title>Complete genome sequence of Neisseria meningitidis serogroup B strain MC58.</title>
        <authorList>
            <person name="Tettelin H."/>
            <person name="Saunders N.J."/>
            <person name="Heidelberg J.F."/>
            <person name="Jeffries A.C."/>
            <person name="Nelson K.E."/>
            <person name="Eisen J.A."/>
            <person name="Ketchum K.A."/>
            <person name="Hood D.W."/>
            <person name="Peden J.F."/>
            <person name="Dodson R.J."/>
            <person name="Nelson W.C."/>
            <person name="Gwinn M.L."/>
            <person name="DeBoy R.T."/>
            <person name="Peterson J.D."/>
            <person name="Hickey E.K."/>
            <person name="Haft D.H."/>
            <person name="Salzberg S.L."/>
            <person name="White O."/>
            <person name="Fleischmann R.D."/>
            <person name="Dougherty B.A."/>
            <person name="Mason T.M."/>
            <person name="Ciecko A."/>
            <person name="Parksey D.S."/>
            <person name="Blair E."/>
            <person name="Cittone H."/>
            <person name="Clark E.B."/>
            <person name="Cotton M.D."/>
            <person name="Utterback T.R."/>
            <person name="Khouri H.M."/>
            <person name="Qin H."/>
            <person name="Vamathevan J.J."/>
            <person name="Gill J."/>
            <person name="Scarlato V."/>
            <person name="Masignani V."/>
            <person name="Pizza M."/>
            <person name="Grandi G."/>
            <person name="Sun L."/>
            <person name="Smith H.O."/>
            <person name="Fraser C.M."/>
            <person name="Moxon E.R."/>
            <person name="Rappuoli R."/>
            <person name="Venter J.C."/>
        </authorList>
    </citation>
    <scope>NUCLEOTIDE SEQUENCE [LARGE SCALE GENOMIC DNA]</scope>
    <source>
        <strain>ATCC BAA-335 / MC58</strain>
    </source>
</reference>
<accession>P66551</accession>
<accession>Q9JQX2</accession>
<sequence length="230" mass="25798">MGQKINPTGFRLAVTKDWASKWFAKSTDFSTVLKQDIDVRNYLRQKLANASVGRVVIERPAKSARITIHSARPGVVIGKKGEDIEVLKRDLQVLMGVPVHVNIEEIRRPELDAQIIADGIAQQLEKRVQFRRAMKRAMQNAMRSGAKGIKIMTSGRLNGADIARSEWYREGRVPLHTLRANVDYATSEAHTTYGVLGLKVWVYTEGNIKSSKPEHESKQRKAGRRNAAAN</sequence>
<evidence type="ECO:0000255" key="1">
    <source>
        <dbReference type="HAMAP-Rule" id="MF_01309"/>
    </source>
</evidence>
<evidence type="ECO:0000256" key="2">
    <source>
        <dbReference type="SAM" id="MobiDB-lite"/>
    </source>
</evidence>
<evidence type="ECO:0000305" key="3"/>